<dbReference type="EC" id="3.4.24.-" evidence="2 3 4"/>
<dbReference type="EMBL" id="AE003853">
    <property type="protein sequence ID" value="AAF95993.1"/>
    <property type="molecule type" value="Genomic_DNA"/>
</dbReference>
<dbReference type="PIR" id="E82502">
    <property type="entry name" value="E82502"/>
</dbReference>
<dbReference type="RefSeq" id="NP_232480.1">
    <property type="nucleotide sequence ID" value="NC_002506.1"/>
</dbReference>
<dbReference type="PDB" id="6U2A">
    <property type="method" value="X-ray"/>
    <property type="resolution" value="2.30 A"/>
    <property type="chains" value="A=36-430"/>
</dbReference>
<dbReference type="PDB" id="6UE4">
    <property type="method" value="X-ray"/>
    <property type="resolution" value="2.08 A"/>
    <property type="chains" value="A/B=36-430"/>
</dbReference>
<dbReference type="PDBsum" id="6U2A"/>
<dbReference type="PDBsum" id="6UE4"/>
<dbReference type="SMR" id="Q9KN86"/>
<dbReference type="STRING" id="243277.VC_A0079"/>
<dbReference type="MEROPS" id="M23.014"/>
<dbReference type="DNASU" id="2612039"/>
<dbReference type="EnsemblBacteria" id="AAF95993">
    <property type="protein sequence ID" value="AAF95993"/>
    <property type="gene ID" value="VC_A0079"/>
</dbReference>
<dbReference type="KEGG" id="vch:VC_A0079"/>
<dbReference type="PATRIC" id="fig|243277.26.peg.2722"/>
<dbReference type="eggNOG" id="COG0739">
    <property type="taxonomic scope" value="Bacteria"/>
</dbReference>
<dbReference type="eggNOG" id="COG1388">
    <property type="taxonomic scope" value="Bacteria"/>
</dbReference>
<dbReference type="HOGENOM" id="CLU_026846_0_0_6"/>
<dbReference type="UniPathway" id="UPA00549"/>
<dbReference type="Proteomes" id="UP000000584">
    <property type="component" value="Chromosome 2"/>
</dbReference>
<dbReference type="GO" id="GO:0042597">
    <property type="term" value="C:periplasmic space"/>
    <property type="evidence" value="ECO:0007669"/>
    <property type="project" value="UniProtKB-SubCell"/>
</dbReference>
<dbReference type="GO" id="GO:0005886">
    <property type="term" value="C:plasma membrane"/>
    <property type="evidence" value="ECO:0007669"/>
    <property type="project" value="UniProtKB-KW"/>
</dbReference>
<dbReference type="GO" id="GO:0046872">
    <property type="term" value="F:metal ion binding"/>
    <property type="evidence" value="ECO:0007669"/>
    <property type="project" value="UniProtKB-KW"/>
</dbReference>
<dbReference type="GO" id="GO:0004222">
    <property type="term" value="F:metalloendopeptidase activity"/>
    <property type="evidence" value="ECO:0000318"/>
    <property type="project" value="GO_Central"/>
</dbReference>
<dbReference type="GO" id="GO:0042834">
    <property type="term" value="F:peptidoglycan binding"/>
    <property type="evidence" value="ECO:0007669"/>
    <property type="project" value="InterPro"/>
</dbReference>
<dbReference type="CDD" id="cd12797">
    <property type="entry name" value="M23_peptidase"/>
    <property type="match status" value="1"/>
</dbReference>
<dbReference type="FunFam" id="3.10.450.350:FF:000008">
    <property type="entry name" value="Cell wall endopeptidase family M23/M37"/>
    <property type="match status" value="1"/>
</dbReference>
<dbReference type="FunFam" id="2.70.70.10:FF:000002">
    <property type="entry name" value="Murein DD-endopeptidase MepM"/>
    <property type="match status" value="1"/>
</dbReference>
<dbReference type="Gene3D" id="3.10.450.350">
    <property type="match status" value="2"/>
</dbReference>
<dbReference type="Gene3D" id="2.70.70.10">
    <property type="entry name" value="Glucose Permease (Domain IIA)"/>
    <property type="match status" value="1"/>
</dbReference>
<dbReference type="InterPro" id="IPR050570">
    <property type="entry name" value="Cell_wall_metabolism_enzyme"/>
</dbReference>
<dbReference type="InterPro" id="IPR045834">
    <property type="entry name" value="Csd3_N2"/>
</dbReference>
<dbReference type="InterPro" id="IPR011055">
    <property type="entry name" value="Dup_hybrid_motif"/>
</dbReference>
<dbReference type="InterPro" id="IPR007340">
    <property type="entry name" value="LysM_Opacity-associatedA"/>
</dbReference>
<dbReference type="InterPro" id="IPR016047">
    <property type="entry name" value="Peptidase_M23"/>
</dbReference>
<dbReference type="PANTHER" id="PTHR21666:SF292">
    <property type="entry name" value="MUREIN DD-ENDOPEPTIDASE MEPM"/>
    <property type="match status" value="1"/>
</dbReference>
<dbReference type="PANTHER" id="PTHR21666">
    <property type="entry name" value="PEPTIDASE-RELATED"/>
    <property type="match status" value="1"/>
</dbReference>
<dbReference type="Pfam" id="PF19425">
    <property type="entry name" value="Csd3_N2"/>
    <property type="match status" value="1"/>
</dbReference>
<dbReference type="Pfam" id="PF04225">
    <property type="entry name" value="LysM_OapA"/>
    <property type="match status" value="1"/>
</dbReference>
<dbReference type="Pfam" id="PF01551">
    <property type="entry name" value="Peptidase_M23"/>
    <property type="match status" value="1"/>
</dbReference>
<dbReference type="SUPFAM" id="SSF51261">
    <property type="entry name" value="Duplicated hybrid motif"/>
    <property type="match status" value="1"/>
</dbReference>
<feature type="signal peptide" evidence="1">
    <location>
        <begin position="1"/>
        <end position="35"/>
    </location>
</feature>
<feature type="chain" id="PRO_0000462118" description="Peptidoglycan DD-endopeptidase ShyA" evidence="1">
    <location>
        <begin position="36"/>
        <end position="430"/>
    </location>
</feature>
<feature type="binding site" evidence="4 13 14">
    <location>
        <position position="297"/>
    </location>
    <ligand>
        <name>Zn(2+)</name>
        <dbReference type="ChEBI" id="CHEBI:29105"/>
        <note>catalytic</note>
    </ligand>
</feature>
<feature type="binding site" evidence="4 13 14">
    <location>
        <position position="301"/>
    </location>
    <ligand>
        <name>Zn(2+)</name>
        <dbReference type="ChEBI" id="CHEBI:29105"/>
        <note>catalytic</note>
    </ligand>
</feature>
<feature type="binding site" evidence="4 13 14">
    <location>
        <position position="378"/>
    </location>
    <ligand>
        <name>Zn(2+)</name>
        <dbReference type="ChEBI" id="CHEBI:29105"/>
        <note>catalytic</note>
    </ligand>
</feature>
<feature type="mutagenesis site" description="No growth defect on plate nor morphological defects in liquid medium." evidence="4">
    <location>
        <begin position="1"/>
        <end position="265"/>
    </location>
</feature>
<feature type="mutagenesis site" description="No reduction in growth efficiency on plate, but small colonies and high level of sphere formation in liquid medium." evidence="4">
    <location>
        <begin position="1"/>
        <end position="160"/>
    </location>
</feature>
<feature type="mutagenesis site" description="Slow degradation of purified whole peptidoglycan (PG) sacculi in vitro; when associated with 427-L--Q-430 deletion. Degrades PG sacculi almost completely within 10 minutes in vitro; when associated with K-109 and 427-L--Q-430 deletion." evidence="4">
    <location>
        <begin position="1"/>
        <end position="66"/>
    </location>
</feature>
<feature type="mutagenesis site" description="No growth defect on plate, but population-wide sphere formation in liquid medium." evidence="4">
    <original>E</original>
    <variation>A</variation>
    <location>
        <position position="103"/>
    </location>
</feature>
<feature type="mutagenesis site" description="100,000-fold growth defect on plate and population-wide sphere formation in liquid medium. No growth defect on plate nor morphological defects in liquid medium; when associated with D-344. Degrades peptidoglycan (PG) sacculi almost completely within 10 minutes in vitro; when associated with 1-M--V-66 and 427-L--Q-430 deletions." evidence="4">
    <original>L</original>
    <variation>K</variation>
    <location>
        <position position="109"/>
    </location>
</feature>
<feature type="mutagenesis site" description="Mild growth defect on plate with small colonies and sphere formation in liquid medium." evidence="4">
    <original>D</original>
    <variation>A</variation>
    <variation>E</variation>
    <location>
        <position position="112"/>
    </location>
</feature>
<feature type="mutagenesis site" description="No complementation of a strain deleted for M23 and P60 family endopeptidases shyABC, VC_1537 and tagE (VC_A1043 and VC_0843)." evidence="4">
    <original>R</original>
    <variation>A</variation>
    <location>
        <position position="286"/>
    </location>
</feature>
<feature type="mutagenesis site" description="No complementation of a strain deleted for M23 and P60 family endopeptidases shyABC, VC_1537 and tagE (VC_A1043 and VC_0843)." evidence="4">
    <original>H</original>
    <variation>A</variation>
    <location>
        <position position="297"/>
    </location>
</feature>
<feature type="mutagenesis site" description="No complementation of a strain deleted for M23 and P60 family endopeptidases shyABC, VC_1537 and tagE (VC_A1043 and VC_0843)." evidence="4">
    <original>D</original>
    <variation>A</variation>
    <location>
        <position position="301"/>
    </location>
</feature>
<feature type="mutagenesis site" description="No growth defect on plate nor morphological defects in liquid medium; when associated with K-109." evidence="4">
    <original>L</original>
    <variation>D</variation>
    <location>
        <position position="344"/>
    </location>
</feature>
<feature type="mutagenesis site" description="No complementation of a strain deleted for M23 and P60 family endopeptidases shyABC, VC_1537 and tagE (VC_A1043 and VC_0843)." evidence="4">
    <original>H</original>
    <variation>A</variation>
    <location>
        <position position="345"/>
    </location>
</feature>
<feature type="mutagenesis site" description="No growth defect on plate nor morphological defects in liquid medium. No complementation of a strain deleted for M23 and P60 family endopeptidases shyABC, VC_1537 and tagE (VC_A1043 and VC_0843)." evidence="4">
    <original>H</original>
    <variation>A</variation>
    <location>
        <position position="376"/>
    </location>
</feature>
<feature type="mutagenesis site" description="Loss of catalytic activity. No complementation of a strain deleted for M23 and P60 family endopeptidases shyABC, VC_1537 and tagE (VC_A1043 and VC_0843)." evidence="2 4">
    <original>H</original>
    <variation>A</variation>
    <location>
        <position position="378"/>
    </location>
</feature>
<feature type="mutagenesis site" description="Slow degradation of purified whole peptidoglycan (PG) sacculi in vitro; when associated with 1-M--V-66 deletion. Degrades PG sacculi almost completely within 10 minutes in vitro; when associated with 1-M--V-66 deletion and K-109." evidence="4">
    <location>
        <begin position="427"/>
        <end position="430"/>
    </location>
</feature>
<keyword id="KW-0002">3D-structure</keyword>
<keyword id="KW-0961">Cell wall biogenesis/degradation</keyword>
<keyword id="KW-0378">Hydrolase</keyword>
<keyword id="KW-0479">Metal-binding</keyword>
<keyword id="KW-0482">Metalloprotease</keyword>
<keyword id="KW-0574">Periplasm</keyword>
<keyword id="KW-0645">Protease</keyword>
<keyword id="KW-1185">Reference proteome</keyword>
<keyword id="KW-0732">Signal</keyword>
<keyword id="KW-0862">Zinc</keyword>
<accession>Q9KN86</accession>
<proteinExistence type="evidence at protein level"/>
<organism evidence="11 12">
    <name type="scientific">Vibrio cholerae serotype O1 (strain ATCC 39315 / El Tor Inaba N16961)</name>
    <dbReference type="NCBI Taxonomy" id="243277"/>
    <lineage>
        <taxon>Bacteria</taxon>
        <taxon>Pseudomonadati</taxon>
        <taxon>Pseudomonadota</taxon>
        <taxon>Gammaproteobacteria</taxon>
        <taxon>Vibrionales</taxon>
        <taxon>Vibrionaceae</taxon>
        <taxon>Vibrio</taxon>
    </lineage>
</organism>
<comment type="function">
    <text evidence="2 3 4">Cell wall peptidoglycan (PG) DD-endopeptidase essential for cell growth and elongation (PubMed:23834664, PubMed:30782657). Hydrolyzes peptide cross-links which covalently connect adjacent PG strands probably to allow insertion of new glycans and thus cell wall expansion (PubMed:23834664, PubMed:30782657). Degrades purified whole PG sacculi in vitro (PubMed:23834664, PubMed:30782657, PubMed:32393643). Releases predominantly short glycan chains from the PG (PubMed:23834664). Cleaves D,D cross-linked muropeptides specifically preferring dimeric tetrapeptide-tetrapeptide (D44) substrates and has only little activity on dimeric tetrapeptide-pentapeptide (D45) substrates (PubMed:23834664). Also converts more than 50% of tetrapeptide-tripeptide (D43) to product as well as more than 50% of D43M, which contains D-Met instead of D-Ala in the fourth position of the acceptor moiety (PubMed:23834664). Cleaves the D,D bond between diaminopimelic acid (DAP) and D-Ala of the PG substrate in vitro (PubMed:23834664). No cleavage of L,D bond connecting two DAP moieties (PubMed:23834664).</text>
</comment>
<comment type="cofactor">
    <cofactor evidence="4">
        <name>Zn(2+)</name>
        <dbReference type="ChEBI" id="CHEBI:29105"/>
    </cofactor>
    <text evidence="4">Binds 1 zinc ion per subunit.</text>
</comment>
<comment type="activity regulation">
    <text evidence="2 3 4">Reduced activity in 0.5 mM EDTA and a complete loss of activity at higher EDTA concentrations (PubMed:23834664, PubMed:30782657). The effect of EDTA can be reversed by addition of 1 mM ZnCl(2) (PubMed:23834664). Conformational switching between open (catalytically active) and closed (catalytically inactive) conformation of this protein is suggested mechanism of its regulation. The signal or inducer of the conformational shift to the open form unmasking the active site is currently not understood (PubMed:32393643).</text>
</comment>
<comment type="biophysicochemical properties">
    <kinetics>
        <KM evidence="2">27.5 uM for cross-linked dimer muropeptide bis-dissacharide tetratetrapeptide (D44)</KM>
        <KM evidence="2">53.7 uM for cross-linked dimer muropeptide bis-dissacharide tetrapentapeptide (D45)</KM>
        <Vmax evidence="2">0.033 umol/min/mg enzyme with cross-linked dimer muropeptide bis-dissacharide tetratetrapeptide (D44) as substrate</Vmax>
        <Vmax evidence="2">0.006 umol/min/mg enzyme with cross-linked dimer muropeptide bis-dissacharide tetrapentapeptide (D45) as substrate</Vmax>
        <text evidence="2">kcat is 0.0042 sec(-1) with cross-linked dimer muropeptide bis-dissacharide tetratetrapeptide (D44) as substrate. kcat is 0.0008 sec(-1) with cross-linked dimer muropeptide bis-dissacharide tetrapentapeptide (D45) as substrate.</text>
    </kinetics>
</comment>
<comment type="pathway">
    <text evidence="2 3 4">Cell wall degradation; peptidoglycan degradation.</text>
</comment>
<comment type="subcellular location">
    <subcellularLocation>
        <location evidence="9 10">Periplasm</location>
    </subcellularLocation>
    <text evidence="2">Localizes to the lateral cell wall. Localizes uniformly to the periphery of the cell with no distinct pattern in the absence of an osmotic challenge. Not observed at the division site at any time point.</text>
</comment>
<comment type="domain">
    <text evidence="4">N-terminal domain I (1-160) inhibits catalytic activity by blocking substrate access to the active site present in domain III (266-430).</text>
</comment>
<comment type="disruption phenotype">
    <text evidence="2 3 4">Grows as wild-type in LB medium, but modest reduction of growth in minimal medium (PubMed:23834664). Decreased average peptidoglycan (PG) chain length and increased level of PG cross-links (PubMed:23834664). Defective cell elongation, but not outer membrane biogenesis (PubMed:23834664). Synthetically lethal with shyC (PubMed:23834664). Simultaneous deletion of shyB results in significant growth defect in minimal medium, but no growth or shape defect in LB medium (PubMed:23834664). ShyAB double mutant does not grow in minimal medium treated with TPEN (N,N,N',N'-tetrakis(2-pyridylmethyl)ethylenediamine), a cell-permeable metal chelator with high affinity for zinc, and cells appear aberrantly thick and long (PubMed:30782657). Rapid decline in viability and morphological defects in a strain deleted for M23 and P60 family endopeptidases shyABC, VC_1537 and tagE (VC_A1043 and VC_0843) (PubMed:32393643).</text>
</comment>
<comment type="similarity">
    <text evidence="8">Belongs to the peptidase M23B family.</text>
</comment>
<gene>
    <name evidence="5 6" type="primary">shyA</name>
    <name evidence="5 11" type="ordered locus">VC_A0079</name>
</gene>
<sequence>MISKSIILRFSELSMRKKATLVGLPLLAVAAISSSLNSPTRQQRIELSLPESPLVQFSSAEHTVEVVKVGHPDYEYEIKPGDNLSTIFNQLGFAYTELMKVMETDLNYLALDTLRPGNVLRFWKGSDNTLAKMELEFSLVDRAVYTRLNDGSYEFEERKIPGTWKVEPLIGEVDGSFSLSANRAGLGAADVDQIVTLLKDKINFGRDLRRGDRFEVVLSRQLVGEKLTGNSEIQAIKIFNRGKEITAYLHQDGQYYDKNGDSLQRAFQRYPVDSKWRISSNFDPRRLHPVTKRVAPHNGTDFAMPIGTPVYTSGDGVVVMTRNHPYAGNYVVIQHGNTYMTRYLHLSKILVKKGQKVSRGQRIGLSGNTGRVTGPHLHYELIVRGRPVNAMKANIPMASSVPKKEMAQFIAKRKELDQMLARQESMLAAQ</sequence>
<evidence type="ECO:0000255" key="1"/>
<evidence type="ECO:0000269" key="2">
    <source>
    </source>
</evidence>
<evidence type="ECO:0000269" key="3">
    <source>
    </source>
</evidence>
<evidence type="ECO:0000269" key="4">
    <source>
    </source>
</evidence>
<evidence type="ECO:0000303" key="5">
    <source>
    </source>
</evidence>
<evidence type="ECO:0000303" key="6">
    <source>
    </source>
</evidence>
<evidence type="ECO:0000303" key="7">
    <source>
    </source>
</evidence>
<evidence type="ECO:0000305" key="8"/>
<evidence type="ECO:0000305" key="9">
    <source>
    </source>
</evidence>
<evidence type="ECO:0000305" key="10">
    <source>
    </source>
</evidence>
<evidence type="ECO:0000312" key="11">
    <source>
        <dbReference type="EMBL" id="AAF95993.1"/>
    </source>
</evidence>
<evidence type="ECO:0000312" key="12">
    <source>
        <dbReference type="Proteomes" id="UP000000584"/>
    </source>
</evidence>
<evidence type="ECO:0007744" key="13">
    <source>
        <dbReference type="PDB" id="6U2A"/>
    </source>
</evidence>
<evidence type="ECO:0007744" key="14">
    <source>
        <dbReference type="PDB" id="6UE4"/>
    </source>
</evidence>
<protein>
    <recommendedName>
        <fullName evidence="5 6">Peptidoglycan DD-endopeptidase ShyA</fullName>
        <ecNumber evidence="2 3 4">3.4.24.-</ecNumber>
    </recommendedName>
    <alternativeName>
        <fullName evidence="7">Autolysin ShyA</fullName>
    </alternativeName>
    <alternativeName>
        <fullName evidence="7">Major peptidoglycan endopeptidase ShyA</fullName>
        <shortName evidence="7">Major PG EP ShyA</shortName>
    </alternativeName>
    <alternativeName>
        <fullName evidence="5">Sidewall hydrolase A</fullName>
    </alternativeName>
    <alternativeName>
        <fullName evidence="5">Zn-metalloprotease</fullName>
    </alternativeName>
</protein>
<reference evidence="11 12" key="1">
    <citation type="journal article" date="2000" name="Nature">
        <title>DNA sequence of both chromosomes of the cholera pathogen Vibrio cholerae.</title>
        <authorList>
            <person name="Heidelberg J.F."/>
            <person name="Eisen J.A."/>
            <person name="Nelson W.C."/>
            <person name="Clayton R.A."/>
            <person name="Gwinn M.L."/>
            <person name="Dodson R.J."/>
            <person name="Haft D.H."/>
            <person name="Hickey E.K."/>
            <person name="Peterson J.D."/>
            <person name="Umayam L.A."/>
            <person name="Gill S.R."/>
            <person name="Nelson K.E."/>
            <person name="Read T.D."/>
            <person name="Tettelin H."/>
            <person name="Richardson D.L."/>
            <person name="Ermolaeva M.D."/>
            <person name="Vamathevan J.J."/>
            <person name="Bass S."/>
            <person name="Qin H."/>
            <person name="Dragoi I."/>
            <person name="Sellers P."/>
            <person name="McDonald L.A."/>
            <person name="Utterback T.R."/>
            <person name="Fleischmann R.D."/>
            <person name="Nierman W.C."/>
            <person name="White O."/>
            <person name="Salzberg S.L."/>
            <person name="Smith H.O."/>
            <person name="Colwell R.R."/>
            <person name="Mekalanos J.J."/>
            <person name="Venter J.C."/>
            <person name="Fraser C.M."/>
        </authorList>
    </citation>
    <scope>NUCLEOTIDE SEQUENCE [LARGE SCALE GENOMIC DNA]</scope>
    <source>
        <strain evidence="12">ATCC 39315 / El Tor Inaba N16961</strain>
    </source>
</reference>
<reference key="2">
    <citation type="journal article" date="2013" name="Mol. Microbiol.">
        <title>Substrate specificity of an elongation-specific peptidoglycan endopeptidase and its implications for cell wall architecture and growth of Vibrio cholerae.</title>
        <authorList>
            <person name="Doerr T."/>
            <person name="Cava F."/>
            <person name="Lam H."/>
            <person name="Davis B.M."/>
            <person name="Waldor M.K."/>
        </authorList>
    </citation>
    <scope>FUNCTION</scope>
    <scope>CATALYTIC ACTIVITY</scope>
    <scope>SUBSTRATE SPECIFICITY</scope>
    <scope>ACTIVITY REGULATION</scope>
    <scope>BIOPHYSICOCHEMICAL PROPERTIES</scope>
    <scope>PATHWAY</scope>
    <scope>SUBCELLULAR LOCATION</scope>
    <scope>DISRUPTION PHENOTYPE</scope>
    <scope>MUTAGENESIS OF HIS-378</scope>
    <source>
        <strain evidence="5">ATCC 39315 / El Tor Inaba N16961</strain>
    </source>
</reference>
<reference key="3">
    <citation type="journal article" date="2019" name="MBio">
        <title>Endopeptidase Regulation as a Novel Function of the Zur-Dependent Zinc Starvation Response.</title>
        <authorList>
            <person name="Murphy S.G."/>
            <person name="Alvarez L."/>
            <person name="Adams M.C."/>
            <person name="Liu S."/>
            <person name="Chappie J.S."/>
            <person name="Cava F."/>
            <person name="Doerr T."/>
        </authorList>
    </citation>
    <scope>FUNCTION</scope>
    <scope>CATALYTIC ACTIVITY</scope>
    <scope>ACTIVITY REGULATION</scope>
    <scope>PATHWAY</scope>
    <scope>DISRUPTION PHENOTYPE</scope>
    <source>
        <strain evidence="6">ATCC 39315 / El Tor Inaba N16961</strain>
    </source>
</reference>
<reference evidence="13 14" key="4">
    <citation type="journal article" date="2020" name="Proc. Natl. Acad. Sci. U.S.A.">
        <title>Structural basis of peptidoglycan endopeptidase regulation.</title>
        <authorList>
            <person name="Shin J.H."/>
            <person name="Sulpizio A.G."/>
            <person name="Kelley A."/>
            <person name="Alvarez L."/>
            <person name="Murphy S.G."/>
            <person name="Fan L."/>
            <person name="Cava F."/>
            <person name="Mao Y."/>
            <person name="Saper M.A."/>
            <person name="Dorr T."/>
        </authorList>
    </citation>
    <scope>X-RAY CRYSTALLOGRAPHY (2.08 ANGSTROMS) OF 36-430 IN COMPLEX WITH ZN(2+)</scope>
    <scope>FUNCTION</scope>
    <scope>CATALYTIC ACTIVITY</scope>
    <scope>COFACTOR</scope>
    <scope>ACTIVITY REGULATION</scope>
    <scope>PATHWAY</scope>
    <scope>SUBCELLULAR LOCATION</scope>
    <scope>DOMAIN</scope>
    <scope>DISRUPTION PHENOTYPE</scope>
    <scope>MUTAGENESIS OF 1-MET--ARG-265; 1-MET--ILE-160; 1-MET--VAL-66; GLU-103; LEU-109; ASP-112; ARG-286; HIS-297; ASP-301; LEU-344; HIS-345; HIS-376; HIS-378 AND 427-LEU--GLN-430</scope>
    <source>
        <strain evidence="7">ATCC 39315 / El Tor Inaba N16961</strain>
    </source>
</reference>
<name>SHYA_VIBCH</name>